<proteinExistence type="inferred from homology"/>
<feature type="chain" id="PRO_0000201319" description="Putative RNA-guided DNA endonuclease InsQ">
    <location>
        <begin position="1"/>
        <end position="402"/>
    </location>
</feature>
<feature type="active site" evidence="1">
    <location>
        <position position="183"/>
    </location>
</feature>
<feature type="active site" evidence="1">
    <location>
        <position position="267"/>
    </location>
</feature>
<feature type="active site" evidence="1">
    <location>
        <position position="363"/>
    </location>
</feature>
<feature type="binding site" evidence="1">
    <location>
        <position position="334"/>
    </location>
    <ligand>
        <name>Zn(2+)</name>
        <dbReference type="ChEBI" id="CHEBI:29105"/>
    </ligand>
</feature>
<feature type="binding site" evidence="1">
    <location>
        <position position="337"/>
    </location>
    <ligand>
        <name>Zn(2+)</name>
        <dbReference type="ChEBI" id="CHEBI:29105"/>
    </ligand>
</feature>
<feature type="binding site" evidence="1">
    <location>
        <position position="353"/>
    </location>
    <ligand>
        <name>Zn(2+)</name>
        <dbReference type="ChEBI" id="CHEBI:29105"/>
    </ligand>
</feature>
<feature type="binding site" evidence="1">
    <location>
        <position position="356"/>
    </location>
    <ligand>
        <name>Zn(2+)</name>
        <dbReference type="ChEBI" id="CHEBI:29105"/>
    </ligand>
</feature>
<evidence type="ECO:0000250" key="1">
    <source>
        <dbReference type="UniProtKB" id="Q7DF80"/>
    </source>
</evidence>
<evidence type="ECO:0000305" key="2"/>
<dbReference type="EC" id="3.1.21.-" evidence="1"/>
<dbReference type="EMBL" id="U00096">
    <property type="protein sequence ID" value="AAC74514.3"/>
    <property type="molecule type" value="Genomic_DNA"/>
</dbReference>
<dbReference type="EMBL" id="AP009048">
    <property type="protein sequence ID" value="BAA15060.2"/>
    <property type="molecule type" value="Genomic_DNA"/>
</dbReference>
<dbReference type="PIR" id="C64895">
    <property type="entry name" value="C64895"/>
</dbReference>
<dbReference type="RefSeq" id="NP_415949.2">
    <property type="nucleotide sequence ID" value="NC_000913.3"/>
</dbReference>
<dbReference type="RefSeq" id="WP_000826416.1">
    <property type="nucleotide sequence ID" value="NZ_LN832404.1"/>
</dbReference>
<dbReference type="SMR" id="P76102"/>
<dbReference type="BioGRID" id="4260186">
    <property type="interactions" value="187"/>
</dbReference>
<dbReference type="BioGRID" id="849339">
    <property type="interactions" value="1"/>
</dbReference>
<dbReference type="DIP" id="DIP-48268N"/>
<dbReference type="FunCoup" id="P76102">
    <property type="interactions" value="107"/>
</dbReference>
<dbReference type="IntAct" id="P76102">
    <property type="interactions" value="1"/>
</dbReference>
<dbReference type="STRING" id="511145.b1432"/>
<dbReference type="PaxDb" id="511145-b1432"/>
<dbReference type="EnsemblBacteria" id="AAC74514">
    <property type="protein sequence ID" value="AAC74514"/>
    <property type="gene ID" value="b1432"/>
</dbReference>
<dbReference type="GeneID" id="944942"/>
<dbReference type="KEGG" id="ecj:JW5228"/>
<dbReference type="KEGG" id="eco:b1432"/>
<dbReference type="PATRIC" id="fig|1411691.4.peg.837"/>
<dbReference type="EchoBASE" id="EB3519"/>
<dbReference type="eggNOG" id="COG0675">
    <property type="taxonomic scope" value="Bacteria"/>
</dbReference>
<dbReference type="HOGENOM" id="CLU_032903_0_4_6"/>
<dbReference type="InParanoid" id="P76102"/>
<dbReference type="OMA" id="NEYQDEH"/>
<dbReference type="OrthoDB" id="6917293at2"/>
<dbReference type="PhylomeDB" id="P76102"/>
<dbReference type="BioCyc" id="EcoCyc:G6743-MONOMER"/>
<dbReference type="PRO" id="PR:P76102"/>
<dbReference type="Proteomes" id="UP000000625">
    <property type="component" value="Chromosome"/>
</dbReference>
<dbReference type="GO" id="GO:0003677">
    <property type="term" value="F:DNA binding"/>
    <property type="evidence" value="ECO:0007669"/>
    <property type="project" value="UniProtKB-KW"/>
</dbReference>
<dbReference type="GO" id="GO:0004519">
    <property type="term" value="F:endonuclease activity"/>
    <property type="evidence" value="ECO:0007669"/>
    <property type="project" value="UniProtKB-KW"/>
</dbReference>
<dbReference type="GO" id="GO:0046872">
    <property type="term" value="F:metal ion binding"/>
    <property type="evidence" value="ECO:0007669"/>
    <property type="project" value="UniProtKB-KW"/>
</dbReference>
<dbReference type="GO" id="GO:0006310">
    <property type="term" value="P:DNA recombination"/>
    <property type="evidence" value="ECO:0007669"/>
    <property type="project" value="UniProtKB-KW"/>
</dbReference>
<dbReference type="GO" id="GO:0032196">
    <property type="term" value="P:transposition"/>
    <property type="evidence" value="ECO:0007669"/>
    <property type="project" value="UniProtKB-KW"/>
</dbReference>
<dbReference type="InterPro" id="IPR010095">
    <property type="entry name" value="Cas12f1-like_TNB"/>
</dbReference>
<dbReference type="InterPro" id="IPR051399">
    <property type="entry name" value="RNA-guided_DNA_endo/Transpos"/>
</dbReference>
<dbReference type="InterPro" id="IPR001959">
    <property type="entry name" value="Transposase"/>
</dbReference>
<dbReference type="InterPro" id="IPR021027">
    <property type="entry name" value="Transposase_put_HTH"/>
</dbReference>
<dbReference type="NCBIfam" id="NF040570">
    <property type="entry name" value="guided_TnpB"/>
    <property type="match status" value="1"/>
</dbReference>
<dbReference type="NCBIfam" id="TIGR01766">
    <property type="entry name" value="IS200/IS605 family accessory protein TnpB-like domain"/>
    <property type="match status" value="1"/>
</dbReference>
<dbReference type="PANTHER" id="PTHR30405:SF25">
    <property type="entry name" value="RNA-GUIDED DNA ENDONUCLEASE INSQ-RELATED"/>
    <property type="match status" value="1"/>
</dbReference>
<dbReference type="PANTHER" id="PTHR30405">
    <property type="entry name" value="TRANSPOSASE"/>
    <property type="match status" value="1"/>
</dbReference>
<dbReference type="Pfam" id="PF07282">
    <property type="entry name" value="Cas12f1-like_TNB"/>
    <property type="match status" value="1"/>
</dbReference>
<dbReference type="Pfam" id="PF12323">
    <property type="entry name" value="HTH_OrfB_IS605"/>
    <property type="match status" value="1"/>
</dbReference>
<dbReference type="Pfam" id="PF01385">
    <property type="entry name" value="OrfB_IS605"/>
    <property type="match status" value="1"/>
</dbReference>
<name>INSQ_ECOLI</name>
<accession>P76102</accession>
<accession>P77144</accession>
<comment type="function">
    <text evidence="1">An RNA-guided dsDNA endonuclease. When guided by an RNA derived from the right-end element of its insertion sequence element (IS), cleaves DNA downstream of the transposon-associated motif (TAM). Cleaves supercoiled and linear DNA in a staggered manner 15-21 bases from the TAM yielding 5'-overhangs. Binds reRNA, an approximately 150 nucleotide base sRNA derived from the 3' end of its own gene, the right end (RE) of the insertion sequence (IS) plus sequence downstream of the IS.</text>
</comment>
<comment type="function">
    <text evidence="2">Not required for transposition of the insertion element. The corresponding transposase in strains MG1655 and W3110 is a truncated pseudogene (yncK).</text>
</comment>
<comment type="similarity">
    <text evidence="2">In the N-terminal section; belongs to the transposase 2 family.</text>
</comment>
<comment type="similarity">
    <text evidence="2">In the C-terminal section; belongs to the transposase 35 family.</text>
</comment>
<comment type="caution">
    <text evidence="2">It is uncertain whether Met-1 or Met-21 is the initiator; the sequence between Met-1 and Met-21 is conserved compared to orthologs but does not have a good ribosome-binding site (RBS) whereas Met-21 has a better RBS. Perhaps both are used, with translation initiating more often at the second Met.</text>
</comment>
<sequence length="402" mass="45741">MKRLQAFKFQLRPGGQQECEMRRFAGACRFVFNRALARQNENHEAGNKYIPYGKMASWLVEWKNATETQWLKDSPSQPLQQSLKDLERAYKNFFRKRAAFPRFKKRGQNDAFRYPQGVKLDQENSRIFLPKLGWMRYRNSRQVTGVVKNVTVSQSCGKWYISIQTESEVSTPVHPSASMVGLDAGVAKLATLSDGTVFEPVNSFQKNQKKLARLQRQLSRKVKFSNNWQKQKRKIQRLHSCIANIRRDYLHKVTTAVSKNHAMIVIEDLKVSNMSKSAAGTVSQPGRNVRAKSGLNRSILDQGWYEMRRQLAYKQLWRGGQVLAVPPAYTSQRCAYCGHTAKENRLSQSKFRCQVCGYTANADVNGARNILAAGHAVLACGEMVQSGRPLKQEPTEMIQATA</sequence>
<organism>
    <name type="scientific">Escherichia coli (strain K12)</name>
    <dbReference type="NCBI Taxonomy" id="83333"/>
    <lineage>
        <taxon>Bacteria</taxon>
        <taxon>Pseudomonadati</taxon>
        <taxon>Pseudomonadota</taxon>
        <taxon>Gammaproteobacteria</taxon>
        <taxon>Enterobacterales</taxon>
        <taxon>Enterobacteriaceae</taxon>
        <taxon>Escherichia</taxon>
    </lineage>
</organism>
<protein>
    <recommendedName>
        <fullName evidence="1">Putative RNA-guided DNA endonuclease InsQ</fullName>
        <ecNumber evidence="1">3.1.21.-</ecNumber>
    </recommendedName>
</protein>
<gene>
    <name type="primary">insQ</name>
    <name type="synonym">tnpB</name>
    <name type="synonym">ydcM</name>
    <name type="ordered locus">b1432</name>
    <name type="ordered locus">JW5228</name>
</gene>
<keyword id="KW-0233">DNA recombination</keyword>
<keyword id="KW-0238">DNA-binding</keyword>
<keyword id="KW-0255">Endonuclease</keyword>
<keyword id="KW-0378">Hydrolase</keyword>
<keyword id="KW-0479">Metal-binding</keyword>
<keyword id="KW-0540">Nuclease</keyword>
<keyword id="KW-1185">Reference proteome</keyword>
<keyword id="KW-0814">Transposable element</keyword>
<keyword id="KW-0815">Transposition</keyword>
<keyword id="KW-0862">Zinc</keyword>
<reference key="1">
    <citation type="journal article" date="1996" name="DNA Res.">
        <title>A 570-kb DNA sequence of the Escherichia coli K-12 genome corresponding to the 28.0-40.1 min region on the linkage map.</title>
        <authorList>
            <person name="Aiba H."/>
            <person name="Baba T."/>
            <person name="Fujita K."/>
            <person name="Hayashi K."/>
            <person name="Inada T."/>
            <person name="Isono K."/>
            <person name="Itoh T."/>
            <person name="Kasai H."/>
            <person name="Kashimoto K."/>
            <person name="Kimura S."/>
            <person name="Kitakawa M."/>
            <person name="Kitagawa M."/>
            <person name="Makino K."/>
            <person name="Miki T."/>
            <person name="Mizobuchi K."/>
            <person name="Mori H."/>
            <person name="Mori T."/>
            <person name="Motomura K."/>
            <person name="Nakade S."/>
            <person name="Nakamura Y."/>
            <person name="Nashimoto H."/>
            <person name="Nishio Y."/>
            <person name="Oshima T."/>
            <person name="Saito N."/>
            <person name="Sampei G."/>
            <person name="Seki Y."/>
            <person name="Sivasundaram S."/>
            <person name="Tagami H."/>
            <person name="Takeda J."/>
            <person name="Takemoto K."/>
            <person name="Takeuchi Y."/>
            <person name="Wada C."/>
            <person name="Yamamoto Y."/>
            <person name="Horiuchi T."/>
        </authorList>
    </citation>
    <scope>NUCLEOTIDE SEQUENCE [LARGE SCALE GENOMIC DNA]</scope>
    <source>
        <strain>K12 / W3110 / ATCC 27325 / DSM 5911</strain>
    </source>
</reference>
<reference key="2">
    <citation type="journal article" date="1997" name="Science">
        <title>The complete genome sequence of Escherichia coli K-12.</title>
        <authorList>
            <person name="Blattner F.R."/>
            <person name="Plunkett G. III"/>
            <person name="Bloch C.A."/>
            <person name="Perna N.T."/>
            <person name="Burland V."/>
            <person name="Riley M."/>
            <person name="Collado-Vides J."/>
            <person name="Glasner J.D."/>
            <person name="Rode C.K."/>
            <person name="Mayhew G.F."/>
            <person name="Gregor J."/>
            <person name="Davis N.W."/>
            <person name="Kirkpatrick H.A."/>
            <person name="Goeden M.A."/>
            <person name="Rose D.J."/>
            <person name="Mau B."/>
            <person name="Shao Y."/>
        </authorList>
    </citation>
    <scope>NUCLEOTIDE SEQUENCE [LARGE SCALE GENOMIC DNA]</scope>
    <source>
        <strain>K12 / MG1655 / ATCC 47076</strain>
    </source>
</reference>
<reference key="3">
    <citation type="journal article" date="2006" name="Mol. Syst. Biol.">
        <title>Highly accurate genome sequences of Escherichia coli K-12 strains MG1655 and W3110.</title>
        <authorList>
            <person name="Hayashi K."/>
            <person name="Morooka N."/>
            <person name="Yamamoto Y."/>
            <person name="Fujita K."/>
            <person name="Isono K."/>
            <person name="Choi S."/>
            <person name="Ohtsubo E."/>
            <person name="Baba T."/>
            <person name="Wanner B.L."/>
            <person name="Mori H."/>
            <person name="Horiuchi T."/>
        </authorList>
    </citation>
    <scope>NUCLEOTIDE SEQUENCE [LARGE SCALE GENOMIC DNA]</scope>
    <source>
        <strain>K12 / W3110 / ATCC 27325 / DSM 5911</strain>
    </source>
</reference>